<proteinExistence type="evidence at transcript level"/>
<organism>
    <name type="scientific">Lycosa singoriensis</name>
    <name type="common">Wolf spider</name>
    <name type="synonym">Aranea singoriensis</name>
    <dbReference type="NCBI Taxonomy" id="434756"/>
    <lineage>
        <taxon>Eukaryota</taxon>
        <taxon>Metazoa</taxon>
        <taxon>Ecdysozoa</taxon>
        <taxon>Arthropoda</taxon>
        <taxon>Chelicerata</taxon>
        <taxon>Arachnida</taxon>
        <taxon>Araneae</taxon>
        <taxon>Araneomorphae</taxon>
        <taxon>Entelegynae</taxon>
        <taxon>Lycosoidea</taxon>
        <taxon>Lycosidae</taxon>
        <taxon>Lycosa</taxon>
    </lineage>
</organism>
<accession>B6DCK9</accession>
<name>TX120_LYCSI</name>
<sequence length="107" mass="11935">MMKVLVVVALLVTLISYSSSEGIDDLEADELLSLMANEQTRKECIPKHHECTSNKHGRCRGNFFKYKCQCTTVVTQDGEQTERCFCGTPPHHKAAELVVGFGKKIFG</sequence>
<protein>
    <recommendedName>
        <fullName>U1-lycotoxin-Ls1h</fullName>
    </recommendedName>
    <alternativeName>
        <fullName>Toxin-like structure LSTX-A20</fullName>
    </alternativeName>
</protein>
<feature type="signal peptide" evidence="2">
    <location>
        <begin position="1"/>
        <end position="20"/>
    </location>
</feature>
<feature type="propeptide" id="PRO_0000401535" evidence="1">
    <location>
        <begin position="21"/>
        <end position="41"/>
    </location>
</feature>
<feature type="chain" id="PRO_0000401536" description="U1-lycotoxin-Ls1h">
    <location>
        <begin position="42"/>
        <end position="107"/>
    </location>
</feature>
<feature type="disulfide bond" evidence="1">
    <location>
        <begin position="44"/>
        <end position="59"/>
    </location>
</feature>
<feature type="disulfide bond" evidence="1">
    <location>
        <begin position="51"/>
        <end position="68"/>
    </location>
</feature>
<feature type="disulfide bond" evidence="1">
    <location>
        <begin position="70"/>
        <end position="84"/>
    </location>
</feature>
<dbReference type="EMBL" id="EU925943">
    <property type="protein sequence ID" value="ACI41275.1"/>
    <property type="molecule type" value="mRNA"/>
</dbReference>
<dbReference type="EMBL" id="FM863947">
    <property type="protein sequence ID" value="CAS03545.1"/>
    <property type="molecule type" value="mRNA"/>
</dbReference>
<dbReference type="SMR" id="B6DCK9"/>
<dbReference type="ArachnoServer" id="AS000892">
    <property type="toxin name" value="U1-lycotoxin-Ls1h"/>
</dbReference>
<dbReference type="GO" id="GO:0005576">
    <property type="term" value="C:extracellular region"/>
    <property type="evidence" value="ECO:0007669"/>
    <property type="project" value="UniProtKB-SubCell"/>
</dbReference>
<dbReference type="GO" id="GO:0090729">
    <property type="term" value="F:toxin activity"/>
    <property type="evidence" value="ECO:0007669"/>
    <property type="project" value="UniProtKB-KW"/>
</dbReference>
<dbReference type="InterPro" id="IPR019553">
    <property type="entry name" value="Spider_toxin_CSTX_knottin"/>
</dbReference>
<dbReference type="Pfam" id="PF10530">
    <property type="entry name" value="Toxin_35"/>
    <property type="match status" value="1"/>
</dbReference>
<keyword id="KW-1015">Disulfide bond</keyword>
<keyword id="KW-0964">Secreted</keyword>
<keyword id="KW-0732">Signal</keyword>
<keyword id="KW-0800">Toxin</keyword>
<evidence type="ECO:0000250" key="1"/>
<evidence type="ECO:0000255" key="2"/>
<evidence type="ECO:0000305" key="3"/>
<reference key="1">
    <citation type="journal article" date="2010" name="Zoology">
        <title>Transcriptome analysis of the venom glands of the Chinese wolf spider Lycosa singoriensis.</title>
        <authorList>
            <person name="Zhang Y."/>
            <person name="Chen J."/>
            <person name="Tang X."/>
            <person name="Wang F."/>
            <person name="Jiang L."/>
            <person name="Xiong X."/>
            <person name="Wang M."/>
            <person name="Rong M."/>
            <person name="Liu Z."/>
            <person name="Liang S."/>
        </authorList>
    </citation>
    <scope>NUCLEOTIDE SEQUENCE [LARGE SCALE MRNA]</scope>
    <source>
        <tissue>Venom gland</tissue>
    </source>
</reference>
<comment type="subcellular location">
    <subcellularLocation>
        <location evidence="1">Secreted</location>
    </subcellularLocation>
</comment>
<comment type="tissue specificity">
    <text>Expressed by the venom gland.</text>
</comment>
<comment type="similarity">
    <text evidence="3">Belongs to the neurotoxin 19 (CSTX) family. 04 (U1-Lctx) subfamily.</text>
</comment>